<feature type="chain" id="PRO_1000093835" description="Translation initiation factor IF-2">
    <location>
        <begin position="1"/>
        <end position="979"/>
    </location>
</feature>
<feature type="domain" description="tr-type G">
    <location>
        <begin position="468"/>
        <end position="641"/>
    </location>
</feature>
<feature type="region of interest" description="Disordered" evidence="3">
    <location>
        <begin position="33"/>
        <end position="391"/>
    </location>
</feature>
<feature type="region of interest" description="G1" evidence="1">
    <location>
        <begin position="477"/>
        <end position="484"/>
    </location>
</feature>
<feature type="region of interest" description="G2" evidence="1">
    <location>
        <begin position="502"/>
        <end position="506"/>
    </location>
</feature>
<feature type="region of interest" description="G3" evidence="1">
    <location>
        <begin position="527"/>
        <end position="530"/>
    </location>
</feature>
<feature type="region of interest" description="G4" evidence="1">
    <location>
        <begin position="581"/>
        <end position="584"/>
    </location>
</feature>
<feature type="region of interest" description="G5" evidence="1">
    <location>
        <begin position="617"/>
        <end position="619"/>
    </location>
</feature>
<feature type="compositionally biased region" description="Low complexity" evidence="3">
    <location>
        <begin position="54"/>
        <end position="63"/>
    </location>
</feature>
<feature type="compositionally biased region" description="Low complexity" evidence="3">
    <location>
        <begin position="139"/>
        <end position="150"/>
    </location>
</feature>
<feature type="compositionally biased region" description="Pro residues" evidence="3">
    <location>
        <begin position="151"/>
        <end position="166"/>
    </location>
</feature>
<feature type="compositionally biased region" description="Acidic residues" evidence="3">
    <location>
        <begin position="234"/>
        <end position="252"/>
    </location>
</feature>
<feature type="compositionally biased region" description="Basic residues" evidence="3">
    <location>
        <begin position="263"/>
        <end position="278"/>
    </location>
</feature>
<feature type="compositionally biased region" description="Basic residues" evidence="3">
    <location>
        <begin position="294"/>
        <end position="303"/>
    </location>
</feature>
<feature type="compositionally biased region" description="Polar residues" evidence="3">
    <location>
        <begin position="314"/>
        <end position="328"/>
    </location>
</feature>
<feature type="compositionally biased region" description="Basic and acidic residues" evidence="3">
    <location>
        <begin position="371"/>
        <end position="380"/>
    </location>
</feature>
<feature type="binding site" evidence="2">
    <location>
        <begin position="477"/>
        <end position="484"/>
    </location>
    <ligand>
        <name>GTP</name>
        <dbReference type="ChEBI" id="CHEBI:37565"/>
    </ligand>
</feature>
<feature type="binding site" evidence="2">
    <location>
        <begin position="527"/>
        <end position="531"/>
    </location>
    <ligand>
        <name>GTP</name>
        <dbReference type="ChEBI" id="CHEBI:37565"/>
    </ligand>
</feature>
<feature type="binding site" evidence="2">
    <location>
        <begin position="581"/>
        <end position="584"/>
    </location>
    <ligand>
        <name>GTP</name>
        <dbReference type="ChEBI" id="CHEBI:37565"/>
    </ligand>
</feature>
<proteinExistence type="inferred from homology"/>
<accession>B1XI09</accession>
<protein>
    <recommendedName>
        <fullName evidence="2">Translation initiation factor IF-2</fullName>
    </recommendedName>
</protein>
<reference key="1">
    <citation type="submission" date="2008-02" db="EMBL/GenBank/DDBJ databases">
        <title>Complete sequence of Synechococcus sp. PCC 7002.</title>
        <authorList>
            <person name="Li T."/>
            <person name="Zhao J."/>
            <person name="Zhao C."/>
            <person name="Liu Z."/>
            <person name="Zhao F."/>
            <person name="Marquardt J."/>
            <person name="Nomura C.T."/>
            <person name="Persson S."/>
            <person name="Detter J.C."/>
            <person name="Richardson P.M."/>
            <person name="Lanz C."/>
            <person name="Schuster S.C."/>
            <person name="Wang J."/>
            <person name="Li S."/>
            <person name="Huang X."/>
            <person name="Cai T."/>
            <person name="Yu Z."/>
            <person name="Luo J."/>
            <person name="Zhao J."/>
            <person name="Bryant D.A."/>
        </authorList>
    </citation>
    <scope>NUCLEOTIDE SEQUENCE [LARGE SCALE GENOMIC DNA]</scope>
    <source>
        <strain>ATCC 27264 / PCC 7002 / PR-6</strain>
    </source>
</reference>
<sequence length="979" mass="105721">MNNEKVRIYELSKELDLENKDILEFCGQLSIDVKSHSSTITTEEADKIRAIATQKRPQAPKAQRPQRKKKQEILSVQHQPQGAKPQASKSESADANHPTSTAKKLERPKLQSPPSRGKETPAQPEESPANNGAKAEPVAKTTSPKAEPAAPAAPKPKLMGPPPRPTPKSSAPKTPDASPATAETSSGATQADVRAKSLSKNTAEAPAKAPKLRPKPQIVGTVSKKPTPVQAIEPELDEEPDTNNVEGDDDATPEVLLAPPKRPAAKPKKAIGPKPSKRKVWEDEEEDESESKKTKTSKLKRRPVVIDDDDDDFGTTTNNNAEVPSVSLSIARPPKPKSASSSPSPSKPSPSKPKKPAAKRSGSGGSGQSQKEQRRDRPDVKTPPAEITLTETMTLREMADILCIAETDIIRRLFSKGIAINITQTLDYDTAQMVAEEFDVKVIAPEVKSAAEKSTEMLDVADLEHLQHRPPVVTIMGHVDHGKTTLLDSIRETKVAQGEAGGITQHIGAYHVDIEHNGKPGQIVFLDTPGHEAFTAMRARGAKVTDIAILVVAADDGVRPQTLEAIRHAQAAKVPIVVAINKMDKLGAEPDRVKQELSEQGLVPEEWGGETIMVPVSALKGENLDTLLEMILLVSEIEELSANPDRLARGTIIEAHLDRARGPVATLLVQNGTLRVGDIIVAGSVMGKIRAMISDRGEKVTDATPSFAVEILGLSEVPAAGDEFEVYSSEKEARAIADERAEGKRQSRLQQAMSSRRVSLSSLSAQAQEGELKELNLVLKADVQGSVEAILGSLQQLPQDEVQIRVLLSAPGEISETDVDLAAASGAIIIGFNTTLAPGARQAAEQEGVDIREYNVIYRFLEEIQGAMEGLLDPEEVEEPLGRAEVRAVFPVGRGSVAGCYVQSGKVVRNRMIRVRRGDVVVYDGSLDSLKRVREDVREVNSGYECGIGVDKFSTWKEGDIIEAYEMVFKRRTLAGRTS</sequence>
<evidence type="ECO:0000250" key="1"/>
<evidence type="ECO:0000255" key="2">
    <source>
        <dbReference type="HAMAP-Rule" id="MF_00100"/>
    </source>
</evidence>
<evidence type="ECO:0000256" key="3">
    <source>
        <dbReference type="SAM" id="MobiDB-lite"/>
    </source>
</evidence>
<name>IF2_PICP2</name>
<dbReference type="EMBL" id="CP000951">
    <property type="protein sequence ID" value="ACA98760.1"/>
    <property type="molecule type" value="Genomic_DNA"/>
</dbReference>
<dbReference type="RefSeq" id="WP_012306384.1">
    <property type="nucleotide sequence ID" value="NZ_JAHHPU010000001.1"/>
</dbReference>
<dbReference type="SMR" id="B1XI09"/>
<dbReference type="STRING" id="32049.SYNPCC7002_A0755"/>
<dbReference type="KEGG" id="syp:SYNPCC7002_A0755"/>
<dbReference type="eggNOG" id="COG0532">
    <property type="taxonomic scope" value="Bacteria"/>
</dbReference>
<dbReference type="HOGENOM" id="CLU_006301_7_0_3"/>
<dbReference type="Proteomes" id="UP000001688">
    <property type="component" value="Chromosome"/>
</dbReference>
<dbReference type="GO" id="GO:0005829">
    <property type="term" value="C:cytosol"/>
    <property type="evidence" value="ECO:0007669"/>
    <property type="project" value="TreeGrafter"/>
</dbReference>
<dbReference type="GO" id="GO:0005525">
    <property type="term" value="F:GTP binding"/>
    <property type="evidence" value="ECO:0007669"/>
    <property type="project" value="UniProtKB-KW"/>
</dbReference>
<dbReference type="GO" id="GO:0003924">
    <property type="term" value="F:GTPase activity"/>
    <property type="evidence" value="ECO:0007669"/>
    <property type="project" value="UniProtKB-UniRule"/>
</dbReference>
<dbReference type="GO" id="GO:0003743">
    <property type="term" value="F:translation initiation factor activity"/>
    <property type="evidence" value="ECO:0007669"/>
    <property type="project" value="UniProtKB-UniRule"/>
</dbReference>
<dbReference type="CDD" id="cd01887">
    <property type="entry name" value="IF2_eIF5B"/>
    <property type="match status" value="1"/>
</dbReference>
<dbReference type="CDD" id="cd03702">
    <property type="entry name" value="IF2_mtIF2_II"/>
    <property type="match status" value="1"/>
</dbReference>
<dbReference type="CDD" id="cd03692">
    <property type="entry name" value="mtIF2_IVc"/>
    <property type="match status" value="1"/>
</dbReference>
<dbReference type="FunFam" id="2.40.30.10:FF:000007">
    <property type="entry name" value="Translation initiation factor IF-2"/>
    <property type="match status" value="1"/>
</dbReference>
<dbReference type="FunFam" id="2.40.30.10:FF:000008">
    <property type="entry name" value="Translation initiation factor IF-2"/>
    <property type="match status" value="1"/>
</dbReference>
<dbReference type="FunFam" id="3.40.50.10050:FF:000001">
    <property type="entry name" value="Translation initiation factor IF-2"/>
    <property type="match status" value="1"/>
</dbReference>
<dbReference type="FunFam" id="3.40.50.300:FF:000019">
    <property type="entry name" value="Translation initiation factor IF-2"/>
    <property type="match status" value="1"/>
</dbReference>
<dbReference type="Gene3D" id="1.10.10.2480">
    <property type="match status" value="1"/>
</dbReference>
<dbReference type="Gene3D" id="3.40.50.300">
    <property type="entry name" value="P-loop containing nucleotide triphosphate hydrolases"/>
    <property type="match status" value="1"/>
</dbReference>
<dbReference type="Gene3D" id="2.40.30.10">
    <property type="entry name" value="Translation factors"/>
    <property type="match status" value="2"/>
</dbReference>
<dbReference type="Gene3D" id="3.40.50.10050">
    <property type="entry name" value="Translation initiation factor IF- 2, domain 3"/>
    <property type="match status" value="1"/>
</dbReference>
<dbReference type="HAMAP" id="MF_00100_B">
    <property type="entry name" value="IF_2_B"/>
    <property type="match status" value="1"/>
</dbReference>
<dbReference type="InterPro" id="IPR053905">
    <property type="entry name" value="EF-G-like_DII"/>
</dbReference>
<dbReference type="InterPro" id="IPR044145">
    <property type="entry name" value="IF2_II"/>
</dbReference>
<dbReference type="InterPro" id="IPR006847">
    <property type="entry name" value="IF2_N"/>
</dbReference>
<dbReference type="InterPro" id="IPR027417">
    <property type="entry name" value="P-loop_NTPase"/>
</dbReference>
<dbReference type="InterPro" id="IPR005225">
    <property type="entry name" value="Small_GTP-bd"/>
</dbReference>
<dbReference type="InterPro" id="IPR000795">
    <property type="entry name" value="T_Tr_GTP-bd_dom"/>
</dbReference>
<dbReference type="InterPro" id="IPR000178">
    <property type="entry name" value="TF_IF2_bacterial-like"/>
</dbReference>
<dbReference type="InterPro" id="IPR015760">
    <property type="entry name" value="TIF_IF2"/>
</dbReference>
<dbReference type="InterPro" id="IPR023115">
    <property type="entry name" value="TIF_IF2_dom3"/>
</dbReference>
<dbReference type="InterPro" id="IPR036925">
    <property type="entry name" value="TIF_IF2_dom3_sf"/>
</dbReference>
<dbReference type="InterPro" id="IPR009000">
    <property type="entry name" value="Transl_B-barrel_sf"/>
</dbReference>
<dbReference type="NCBIfam" id="TIGR00487">
    <property type="entry name" value="IF-2"/>
    <property type="match status" value="1"/>
</dbReference>
<dbReference type="NCBIfam" id="TIGR00231">
    <property type="entry name" value="small_GTP"/>
    <property type="match status" value="1"/>
</dbReference>
<dbReference type="PANTHER" id="PTHR43381:SF5">
    <property type="entry name" value="TR-TYPE G DOMAIN-CONTAINING PROTEIN"/>
    <property type="match status" value="1"/>
</dbReference>
<dbReference type="PANTHER" id="PTHR43381">
    <property type="entry name" value="TRANSLATION INITIATION FACTOR IF-2-RELATED"/>
    <property type="match status" value="1"/>
</dbReference>
<dbReference type="Pfam" id="PF22042">
    <property type="entry name" value="EF-G_D2"/>
    <property type="match status" value="1"/>
</dbReference>
<dbReference type="Pfam" id="PF00009">
    <property type="entry name" value="GTP_EFTU"/>
    <property type="match status" value="1"/>
</dbReference>
<dbReference type="Pfam" id="PF11987">
    <property type="entry name" value="IF-2"/>
    <property type="match status" value="1"/>
</dbReference>
<dbReference type="Pfam" id="PF04760">
    <property type="entry name" value="IF2_N"/>
    <property type="match status" value="2"/>
</dbReference>
<dbReference type="PRINTS" id="PR00315">
    <property type="entry name" value="ELONGATNFCT"/>
</dbReference>
<dbReference type="SUPFAM" id="SSF52156">
    <property type="entry name" value="Initiation factor IF2/eIF5b, domain 3"/>
    <property type="match status" value="1"/>
</dbReference>
<dbReference type="SUPFAM" id="SSF52540">
    <property type="entry name" value="P-loop containing nucleoside triphosphate hydrolases"/>
    <property type="match status" value="1"/>
</dbReference>
<dbReference type="SUPFAM" id="SSF50447">
    <property type="entry name" value="Translation proteins"/>
    <property type="match status" value="2"/>
</dbReference>
<dbReference type="PROSITE" id="PS51722">
    <property type="entry name" value="G_TR_2"/>
    <property type="match status" value="1"/>
</dbReference>
<comment type="function">
    <text evidence="2">One of the essential components for the initiation of protein synthesis. Protects formylmethionyl-tRNA from spontaneous hydrolysis and promotes its binding to the 30S ribosomal subunits. Also involved in the hydrolysis of GTP during the formation of the 70S ribosomal complex.</text>
</comment>
<comment type="subcellular location">
    <subcellularLocation>
        <location evidence="2">Cytoplasm</location>
    </subcellularLocation>
</comment>
<comment type="similarity">
    <text evidence="2">Belongs to the TRAFAC class translation factor GTPase superfamily. Classic translation factor GTPase family. IF-2 subfamily.</text>
</comment>
<keyword id="KW-0963">Cytoplasm</keyword>
<keyword id="KW-0342">GTP-binding</keyword>
<keyword id="KW-0396">Initiation factor</keyword>
<keyword id="KW-0547">Nucleotide-binding</keyword>
<keyword id="KW-0648">Protein biosynthesis</keyword>
<keyword id="KW-1185">Reference proteome</keyword>
<organism>
    <name type="scientific">Picosynechococcus sp. (strain ATCC 27264 / PCC 7002 / PR-6)</name>
    <name type="common">Agmenellum quadruplicatum</name>
    <dbReference type="NCBI Taxonomy" id="32049"/>
    <lineage>
        <taxon>Bacteria</taxon>
        <taxon>Bacillati</taxon>
        <taxon>Cyanobacteriota</taxon>
        <taxon>Cyanophyceae</taxon>
        <taxon>Oscillatoriophycideae</taxon>
        <taxon>Chroococcales</taxon>
        <taxon>Geminocystaceae</taxon>
        <taxon>Picosynechococcus</taxon>
    </lineage>
</organism>
<gene>
    <name evidence="2" type="primary">infB</name>
    <name type="ordered locus">SYNPCC7002_A0755</name>
</gene>